<reference key="1">
    <citation type="journal article" date="2003" name="Nat. Genet.">
        <title>Comparative analysis of the genome sequences of Bordetella pertussis, Bordetella parapertussis and Bordetella bronchiseptica.</title>
        <authorList>
            <person name="Parkhill J."/>
            <person name="Sebaihia M."/>
            <person name="Preston A."/>
            <person name="Murphy L.D."/>
            <person name="Thomson N.R."/>
            <person name="Harris D.E."/>
            <person name="Holden M.T.G."/>
            <person name="Churcher C.M."/>
            <person name="Bentley S.D."/>
            <person name="Mungall K.L."/>
            <person name="Cerdeno-Tarraga A.-M."/>
            <person name="Temple L."/>
            <person name="James K.D."/>
            <person name="Harris B."/>
            <person name="Quail M.A."/>
            <person name="Achtman M."/>
            <person name="Atkin R."/>
            <person name="Baker S."/>
            <person name="Basham D."/>
            <person name="Bason N."/>
            <person name="Cherevach I."/>
            <person name="Chillingworth T."/>
            <person name="Collins M."/>
            <person name="Cronin A."/>
            <person name="Davis P."/>
            <person name="Doggett J."/>
            <person name="Feltwell T."/>
            <person name="Goble A."/>
            <person name="Hamlin N."/>
            <person name="Hauser H."/>
            <person name="Holroyd S."/>
            <person name="Jagels K."/>
            <person name="Leather S."/>
            <person name="Moule S."/>
            <person name="Norberczak H."/>
            <person name="O'Neil S."/>
            <person name="Ormond D."/>
            <person name="Price C."/>
            <person name="Rabbinowitsch E."/>
            <person name="Rutter S."/>
            <person name="Sanders M."/>
            <person name="Saunders D."/>
            <person name="Seeger K."/>
            <person name="Sharp S."/>
            <person name="Simmonds M."/>
            <person name="Skelton J."/>
            <person name="Squares R."/>
            <person name="Squares S."/>
            <person name="Stevens K."/>
            <person name="Unwin L."/>
            <person name="Whitehead S."/>
            <person name="Barrell B.G."/>
            <person name="Maskell D.J."/>
        </authorList>
    </citation>
    <scope>NUCLEOTIDE SEQUENCE [LARGE SCALE GENOMIC DNA]</scope>
    <source>
        <strain>ATCC BAA-588 / NCTC 13252 / RB50</strain>
    </source>
</reference>
<protein>
    <recommendedName>
        <fullName evidence="1">Small ribosomal subunit protein bS6</fullName>
    </recommendedName>
    <alternativeName>
        <fullName evidence="2">30S ribosomal protein S6</fullName>
    </alternativeName>
</protein>
<dbReference type="EMBL" id="BX640442">
    <property type="protein sequence ID" value="CAE32411.1"/>
    <property type="status" value="ALT_INIT"/>
    <property type="molecule type" value="Genomic_DNA"/>
</dbReference>
<dbReference type="RefSeq" id="WP_010926331.1">
    <property type="nucleotide sequence ID" value="NC_002927.3"/>
</dbReference>
<dbReference type="SMR" id="Q7WL35"/>
<dbReference type="GeneID" id="93204250"/>
<dbReference type="KEGG" id="bbr:BB1914"/>
<dbReference type="eggNOG" id="COG0360">
    <property type="taxonomic scope" value="Bacteria"/>
</dbReference>
<dbReference type="HOGENOM" id="CLU_113441_6_0_4"/>
<dbReference type="Proteomes" id="UP000001027">
    <property type="component" value="Chromosome"/>
</dbReference>
<dbReference type="GO" id="GO:0022627">
    <property type="term" value="C:cytosolic small ribosomal subunit"/>
    <property type="evidence" value="ECO:0007669"/>
    <property type="project" value="TreeGrafter"/>
</dbReference>
<dbReference type="GO" id="GO:0070181">
    <property type="term" value="F:small ribosomal subunit rRNA binding"/>
    <property type="evidence" value="ECO:0007669"/>
    <property type="project" value="TreeGrafter"/>
</dbReference>
<dbReference type="GO" id="GO:0003735">
    <property type="term" value="F:structural constituent of ribosome"/>
    <property type="evidence" value="ECO:0007669"/>
    <property type="project" value="InterPro"/>
</dbReference>
<dbReference type="GO" id="GO:0006412">
    <property type="term" value="P:translation"/>
    <property type="evidence" value="ECO:0007669"/>
    <property type="project" value="UniProtKB-UniRule"/>
</dbReference>
<dbReference type="CDD" id="cd00473">
    <property type="entry name" value="bS6"/>
    <property type="match status" value="1"/>
</dbReference>
<dbReference type="Gene3D" id="3.30.70.60">
    <property type="match status" value="1"/>
</dbReference>
<dbReference type="HAMAP" id="MF_00360">
    <property type="entry name" value="Ribosomal_bS6"/>
    <property type="match status" value="1"/>
</dbReference>
<dbReference type="InterPro" id="IPR000529">
    <property type="entry name" value="Ribosomal_bS6"/>
</dbReference>
<dbReference type="InterPro" id="IPR035980">
    <property type="entry name" value="Ribosomal_bS6_sf"/>
</dbReference>
<dbReference type="InterPro" id="IPR020814">
    <property type="entry name" value="Ribosomal_S6_plastid/chlpt"/>
</dbReference>
<dbReference type="InterPro" id="IPR014717">
    <property type="entry name" value="Transl_elong_EF1B/ribsomal_bS6"/>
</dbReference>
<dbReference type="NCBIfam" id="TIGR00166">
    <property type="entry name" value="S6"/>
    <property type="match status" value="1"/>
</dbReference>
<dbReference type="PANTHER" id="PTHR21011">
    <property type="entry name" value="MITOCHONDRIAL 28S RIBOSOMAL PROTEIN S6"/>
    <property type="match status" value="1"/>
</dbReference>
<dbReference type="PANTHER" id="PTHR21011:SF1">
    <property type="entry name" value="SMALL RIBOSOMAL SUBUNIT PROTEIN BS6M"/>
    <property type="match status" value="1"/>
</dbReference>
<dbReference type="Pfam" id="PF01250">
    <property type="entry name" value="Ribosomal_S6"/>
    <property type="match status" value="1"/>
</dbReference>
<dbReference type="SUPFAM" id="SSF54995">
    <property type="entry name" value="Ribosomal protein S6"/>
    <property type="match status" value="1"/>
</dbReference>
<proteinExistence type="inferred from homology"/>
<gene>
    <name evidence="1" type="primary">rpsF</name>
    <name type="ordered locus">BB1914</name>
</gene>
<comment type="function">
    <text evidence="1">Binds together with bS18 to 16S ribosomal RNA.</text>
</comment>
<comment type="similarity">
    <text evidence="1">Belongs to the bacterial ribosomal protein bS6 family.</text>
</comment>
<comment type="sequence caution" evidence="2">
    <conflict type="erroneous initiation">
        <sequence resource="EMBL-CDS" id="CAE32411"/>
    </conflict>
</comment>
<evidence type="ECO:0000255" key="1">
    <source>
        <dbReference type="HAMAP-Rule" id="MF_00360"/>
    </source>
</evidence>
<evidence type="ECO:0000305" key="2"/>
<sequence>MRHYEVVFIVHPDQSEQVPAMVERYQALVTGQSGTVHRLEDWGRRQLAYPIQKLVKAHYVCMNIECGQATLDELEHSFRYNDAVLRHLVIKTKKAPAAPSIMMKSVEREEARKASAEAAATATAAE</sequence>
<accession>Q7WL35</accession>
<feature type="chain" id="PRO_0000176732" description="Small ribosomal subunit protein bS6">
    <location>
        <begin position="1"/>
        <end position="126"/>
    </location>
</feature>
<keyword id="KW-0687">Ribonucleoprotein</keyword>
<keyword id="KW-0689">Ribosomal protein</keyword>
<keyword id="KW-0694">RNA-binding</keyword>
<keyword id="KW-0699">rRNA-binding</keyword>
<name>RS6_BORBR</name>
<organism>
    <name type="scientific">Bordetella bronchiseptica (strain ATCC BAA-588 / NCTC 13252 / RB50)</name>
    <name type="common">Alcaligenes bronchisepticus</name>
    <dbReference type="NCBI Taxonomy" id="257310"/>
    <lineage>
        <taxon>Bacteria</taxon>
        <taxon>Pseudomonadati</taxon>
        <taxon>Pseudomonadota</taxon>
        <taxon>Betaproteobacteria</taxon>
        <taxon>Burkholderiales</taxon>
        <taxon>Alcaligenaceae</taxon>
        <taxon>Bordetella</taxon>
    </lineage>
</organism>